<proteinExistence type="inferred from homology"/>
<gene>
    <name evidence="1" type="primary">clpS</name>
    <name type="ordered locus">SPC_0946</name>
</gene>
<name>CLPS_SALPC</name>
<protein>
    <recommendedName>
        <fullName evidence="1">ATP-dependent Clp protease adapter protein ClpS</fullName>
    </recommendedName>
</protein>
<sequence>MGKTNDWLDFDQLVEDSVRDALKPPSMYKVILVNDDYTPMEFVIDVLQKFFSYDVERATQLMLAVHYQGKAICGVFTAEVAETKVAMVNKYARENEHPLLCTLEKA</sequence>
<feature type="chain" id="PRO_1000132815" description="ATP-dependent Clp protease adapter protein ClpS">
    <location>
        <begin position="1"/>
        <end position="106"/>
    </location>
</feature>
<evidence type="ECO:0000255" key="1">
    <source>
        <dbReference type="HAMAP-Rule" id="MF_00302"/>
    </source>
</evidence>
<organism>
    <name type="scientific">Salmonella paratyphi C (strain RKS4594)</name>
    <dbReference type="NCBI Taxonomy" id="476213"/>
    <lineage>
        <taxon>Bacteria</taxon>
        <taxon>Pseudomonadati</taxon>
        <taxon>Pseudomonadota</taxon>
        <taxon>Gammaproteobacteria</taxon>
        <taxon>Enterobacterales</taxon>
        <taxon>Enterobacteriaceae</taxon>
        <taxon>Salmonella</taxon>
    </lineage>
</organism>
<reference key="1">
    <citation type="journal article" date="2009" name="PLoS ONE">
        <title>Salmonella paratyphi C: genetic divergence from Salmonella choleraesuis and pathogenic convergence with Salmonella typhi.</title>
        <authorList>
            <person name="Liu W.-Q."/>
            <person name="Feng Y."/>
            <person name="Wang Y."/>
            <person name="Zou Q.-H."/>
            <person name="Chen F."/>
            <person name="Guo J.-T."/>
            <person name="Peng Y.-H."/>
            <person name="Jin Y."/>
            <person name="Li Y.-G."/>
            <person name="Hu S.-N."/>
            <person name="Johnston R.N."/>
            <person name="Liu G.-R."/>
            <person name="Liu S.-L."/>
        </authorList>
    </citation>
    <scope>NUCLEOTIDE SEQUENCE [LARGE SCALE GENOMIC DNA]</scope>
    <source>
        <strain>RKS4594</strain>
    </source>
</reference>
<accession>C0PXR3</accession>
<comment type="function">
    <text evidence="1">Involved in the modulation of the specificity of the ClpAP-mediated ATP-dependent protein degradation.</text>
</comment>
<comment type="subunit">
    <text evidence="1">Binds to the N-terminal domain of the chaperone ClpA.</text>
</comment>
<comment type="similarity">
    <text evidence="1">Belongs to the ClpS family.</text>
</comment>
<dbReference type="EMBL" id="CP000857">
    <property type="protein sequence ID" value="ACN45113.1"/>
    <property type="molecule type" value="Genomic_DNA"/>
</dbReference>
<dbReference type="RefSeq" id="WP_000520789.1">
    <property type="nucleotide sequence ID" value="NC_012125.1"/>
</dbReference>
<dbReference type="SMR" id="C0PXR3"/>
<dbReference type="KEGG" id="sei:SPC_0946"/>
<dbReference type="HOGENOM" id="CLU_134358_2_1_6"/>
<dbReference type="Proteomes" id="UP000001599">
    <property type="component" value="Chromosome"/>
</dbReference>
<dbReference type="GO" id="GO:0030163">
    <property type="term" value="P:protein catabolic process"/>
    <property type="evidence" value="ECO:0007669"/>
    <property type="project" value="InterPro"/>
</dbReference>
<dbReference type="GO" id="GO:0006508">
    <property type="term" value="P:proteolysis"/>
    <property type="evidence" value="ECO:0007669"/>
    <property type="project" value="UniProtKB-UniRule"/>
</dbReference>
<dbReference type="FunFam" id="3.30.1390.10:FF:000002">
    <property type="entry name" value="ATP-dependent Clp protease adapter protein ClpS"/>
    <property type="match status" value="1"/>
</dbReference>
<dbReference type="Gene3D" id="3.30.1390.10">
    <property type="match status" value="1"/>
</dbReference>
<dbReference type="HAMAP" id="MF_00302">
    <property type="entry name" value="ClpS"/>
    <property type="match status" value="1"/>
</dbReference>
<dbReference type="InterPro" id="IPR022935">
    <property type="entry name" value="ClpS"/>
</dbReference>
<dbReference type="InterPro" id="IPR003769">
    <property type="entry name" value="ClpS_core"/>
</dbReference>
<dbReference type="InterPro" id="IPR014719">
    <property type="entry name" value="Ribosomal_bL12_C/ClpS-like"/>
</dbReference>
<dbReference type="NCBIfam" id="NF000670">
    <property type="entry name" value="PRK00033.1-3"/>
    <property type="match status" value="1"/>
</dbReference>
<dbReference type="NCBIfam" id="NF000672">
    <property type="entry name" value="PRK00033.1-5"/>
    <property type="match status" value="1"/>
</dbReference>
<dbReference type="PANTHER" id="PTHR33473:SF19">
    <property type="entry name" value="ATP-DEPENDENT CLP PROTEASE ADAPTER PROTEIN CLPS"/>
    <property type="match status" value="1"/>
</dbReference>
<dbReference type="PANTHER" id="PTHR33473">
    <property type="entry name" value="ATP-DEPENDENT CLP PROTEASE ADAPTER PROTEIN CLPS1, CHLOROPLASTIC"/>
    <property type="match status" value="1"/>
</dbReference>
<dbReference type="Pfam" id="PF02617">
    <property type="entry name" value="ClpS"/>
    <property type="match status" value="1"/>
</dbReference>
<dbReference type="SUPFAM" id="SSF54736">
    <property type="entry name" value="ClpS-like"/>
    <property type="match status" value="1"/>
</dbReference>